<name>LEXA_BURM9</name>
<keyword id="KW-0068">Autocatalytic cleavage</keyword>
<keyword id="KW-0227">DNA damage</keyword>
<keyword id="KW-0234">DNA repair</keyword>
<keyword id="KW-0235">DNA replication</keyword>
<keyword id="KW-0238">DNA-binding</keyword>
<keyword id="KW-0378">Hydrolase</keyword>
<keyword id="KW-0678">Repressor</keyword>
<keyword id="KW-0742">SOS response</keyword>
<keyword id="KW-0804">Transcription</keyword>
<keyword id="KW-0805">Transcription regulation</keyword>
<comment type="function">
    <text evidence="1">Represses a number of genes involved in the response to DNA damage (SOS response), including recA and lexA. In the presence of single-stranded DNA, RecA interacts with LexA causing an autocatalytic cleavage which disrupts the DNA-binding part of LexA, leading to derepression of the SOS regulon and eventually DNA repair.</text>
</comment>
<comment type="catalytic activity">
    <reaction evidence="1">
        <text>Hydrolysis of Ala-|-Gly bond in repressor LexA.</text>
        <dbReference type="EC" id="3.4.21.88"/>
    </reaction>
</comment>
<comment type="subunit">
    <text evidence="1">Homodimer.</text>
</comment>
<comment type="similarity">
    <text evidence="1">Belongs to the peptidase S24 family.</text>
</comment>
<sequence>MIKLTARQQQVFDLIRRAIERSGFPPTRAEIAAELGFSSPNAAEEHLRALARKGVIELAAGASRGIRLLGIDDAPHQLTLPHAALMQLSLPLVGRVAAGSPILAQEHISQHYACDPALFSSKPDYLLKVRGLSMRDAGILDGDLLAVQKRTEAKDGQIIVARLGDDVTVKRLKRRPGGVELIAENPDYENIFVKAGSAEFALEGIAVGLIRPGEF</sequence>
<accession>A2S339</accession>
<evidence type="ECO:0000255" key="1">
    <source>
        <dbReference type="HAMAP-Rule" id="MF_00015"/>
    </source>
</evidence>
<dbReference type="EC" id="3.4.21.88" evidence="1"/>
<dbReference type="EMBL" id="CP000546">
    <property type="protein sequence ID" value="ABN02361.1"/>
    <property type="molecule type" value="Genomic_DNA"/>
</dbReference>
<dbReference type="RefSeq" id="WP_004191638.1">
    <property type="nucleotide sequence ID" value="NC_008836.1"/>
</dbReference>
<dbReference type="SMR" id="A2S339"/>
<dbReference type="MEROPS" id="S24.001"/>
<dbReference type="GeneID" id="93060159"/>
<dbReference type="KEGG" id="bml:BMA10229_A0356"/>
<dbReference type="HOGENOM" id="CLU_066192_45_3_4"/>
<dbReference type="Proteomes" id="UP000002283">
    <property type="component" value="Chromosome I"/>
</dbReference>
<dbReference type="GO" id="GO:0003677">
    <property type="term" value="F:DNA binding"/>
    <property type="evidence" value="ECO:0007669"/>
    <property type="project" value="UniProtKB-UniRule"/>
</dbReference>
<dbReference type="GO" id="GO:0004252">
    <property type="term" value="F:serine-type endopeptidase activity"/>
    <property type="evidence" value="ECO:0007669"/>
    <property type="project" value="UniProtKB-UniRule"/>
</dbReference>
<dbReference type="GO" id="GO:0006281">
    <property type="term" value="P:DNA repair"/>
    <property type="evidence" value="ECO:0007669"/>
    <property type="project" value="UniProtKB-UniRule"/>
</dbReference>
<dbReference type="GO" id="GO:0006260">
    <property type="term" value="P:DNA replication"/>
    <property type="evidence" value="ECO:0007669"/>
    <property type="project" value="UniProtKB-UniRule"/>
</dbReference>
<dbReference type="GO" id="GO:0045892">
    <property type="term" value="P:negative regulation of DNA-templated transcription"/>
    <property type="evidence" value="ECO:0007669"/>
    <property type="project" value="UniProtKB-UniRule"/>
</dbReference>
<dbReference type="GO" id="GO:0006508">
    <property type="term" value="P:proteolysis"/>
    <property type="evidence" value="ECO:0007669"/>
    <property type="project" value="InterPro"/>
</dbReference>
<dbReference type="GO" id="GO:0009432">
    <property type="term" value="P:SOS response"/>
    <property type="evidence" value="ECO:0007669"/>
    <property type="project" value="UniProtKB-UniRule"/>
</dbReference>
<dbReference type="CDD" id="cd06529">
    <property type="entry name" value="S24_LexA-like"/>
    <property type="match status" value="1"/>
</dbReference>
<dbReference type="FunFam" id="1.10.10.10:FF:000009">
    <property type="entry name" value="LexA repressor"/>
    <property type="match status" value="1"/>
</dbReference>
<dbReference type="FunFam" id="2.10.109.10:FF:000001">
    <property type="entry name" value="LexA repressor"/>
    <property type="match status" value="1"/>
</dbReference>
<dbReference type="Gene3D" id="2.10.109.10">
    <property type="entry name" value="Umud Fragment, subunit A"/>
    <property type="match status" value="1"/>
</dbReference>
<dbReference type="Gene3D" id="1.10.10.10">
    <property type="entry name" value="Winged helix-like DNA-binding domain superfamily/Winged helix DNA-binding domain"/>
    <property type="match status" value="1"/>
</dbReference>
<dbReference type="HAMAP" id="MF_00015">
    <property type="entry name" value="LexA"/>
    <property type="match status" value="1"/>
</dbReference>
<dbReference type="InterPro" id="IPR006200">
    <property type="entry name" value="LexA"/>
</dbReference>
<dbReference type="InterPro" id="IPR039418">
    <property type="entry name" value="LexA-like"/>
</dbReference>
<dbReference type="InterPro" id="IPR036286">
    <property type="entry name" value="LexA/Signal_pep-like_sf"/>
</dbReference>
<dbReference type="InterPro" id="IPR006199">
    <property type="entry name" value="LexA_DNA-bd_dom"/>
</dbReference>
<dbReference type="InterPro" id="IPR050077">
    <property type="entry name" value="LexA_repressor"/>
</dbReference>
<dbReference type="InterPro" id="IPR006197">
    <property type="entry name" value="Peptidase_S24_LexA"/>
</dbReference>
<dbReference type="InterPro" id="IPR015927">
    <property type="entry name" value="Peptidase_S24_S26A/B/C"/>
</dbReference>
<dbReference type="InterPro" id="IPR036388">
    <property type="entry name" value="WH-like_DNA-bd_sf"/>
</dbReference>
<dbReference type="InterPro" id="IPR036390">
    <property type="entry name" value="WH_DNA-bd_sf"/>
</dbReference>
<dbReference type="NCBIfam" id="TIGR00498">
    <property type="entry name" value="lexA"/>
    <property type="match status" value="1"/>
</dbReference>
<dbReference type="PANTHER" id="PTHR33516">
    <property type="entry name" value="LEXA REPRESSOR"/>
    <property type="match status" value="1"/>
</dbReference>
<dbReference type="PANTHER" id="PTHR33516:SF2">
    <property type="entry name" value="LEXA REPRESSOR-RELATED"/>
    <property type="match status" value="1"/>
</dbReference>
<dbReference type="Pfam" id="PF01726">
    <property type="entry name" value="LexA_DNA_bind"/>
    <property type="match status" value="1"/>
</dbReference>
<dbReference type="Pfam" id="PF00717">
    <property type="entry name" value="Peptidase_S24"/>
    <property type="match status" value="1"/>
</dbReference>
<dbReference type="PRINTS" id="PR00726">
    <property type="entry name" value="LEXASERPTASE"/>
</dbReference>
<dbReference type="SUPFAM" id="SSF51306">
    <property type="entry name" value="LexA/Signal peptidase"/>
    <property type="match status" value="1"/>
</dbReference>
<dbReference type="SUPFAM" id="SSF46785">
    <property type="entry name" value="Winged helix' DNA-binding domain"/>
    <property type="match status" value="1"/>
</dbReference>
<protein>
    <recommendedName>
        <fullName evidence="1">LexA repressor</fullName>
        <ecNumber evidence="1">3.4.21.88</ecNumber>
    </recommendedName>
</protein>
<feature type="chain" id="PRO_1000001269" description="LexA repressor">
    <location>
        <begin position="1"/>
        <end position="215"/>
    </location>
</feature>
<feature type="DNA-binding region" description="H-T-H motif" evidence="1">
    <location>
        <begin position="28"/>
        <end position="48"/>
    </location>
</feature>
<feature type="active site" description="For autocatalytic cleavage activity" evidence="1">
    <location>
        <position position="133"/>
    </location>
</feature>
<feature type="active site" description="For autocatalytic cleavage activity" evidence="1">
    <location>
        <position position="170"/>
    </location>
</feature>
<feature type="site" description="Cleavage; by autolysis" evidence="1">
    <location>
        <begin position="98"/>
        <end position="99"/>
    </location>
</feature>
<proteinExistence type="inferred from homology"/>
<organism>
    <name type="scientific">Burkholderia mallei (strain NCTC 10229)</name>
    <dbReference type="NCBI Taxonomy" id="412022"/>
    <lineage>
        <taxon>Bacteria</taxon>
        <taxon>Pseudomonadati</taxon>
        <taxon>Pseudomonadota</taxon>
        <taxon>Betaproteobacteria</taxon>
        <taxon>Burkholderiales</taxon>
        <taxon>Burkholderiaceae</taxon>
        <taxon>Burkholderia</taxon>
        <taxon>pseudomallei group</taxon>
    </lineage>
</organism>
<gene>
    <name evidence="1" type="primary">lexA</name>
    <name type="ordered locus">BMA10229_A0356</name>
</gene>
<reference key="1">
    <citation type="journal article" date="2010" name="Genome Biol. Evol.">
        <title>Continuing evolution of Burkholderia mallei through genome reduction and large-scale rearrangements.</title>
        <authorList>
            <person name="Losada L."/>
            <person name="Ronning C.M."/>
            <person name="DeShazer D."/>
            <person name="Woods D."/>
            <person name="Fedorova N."/>
            <person name="Kim H.S."/>
            <person name="Shabalina S.A."/>
            <person name="Pearson T.R."/>
            <person name="Brinkac L."/>
            <person name="Tan P."/>
            <person name="Nandi T."/>
            <person name="Crabtree J."/>
            <person name="Badger J."/>
            <person name="Beckstrom-Sternberg S."/>
            <person name="Saqib M."/>
            <person name="Schutzer S.E."/>
            <person name="Keim P."/>
            <person name="Nierman W.C."/>
        </authorList>
    </citation>
    <scope>NUCLEOTIDE SEQUENCE [LARGE SCALE GENOMIC DNA]</scope>
    <source>
        <strain>NCTC 10229</strain>
    </source>
</reference>